<geneLocation type="chloroplast"/>
<sequence>MILEHVLVLSAYLFLIGLYGLITSRNMVRALMCLELILNAVNMNFVTFSDFFDNSELKGDIFCIFVIAIAAAEAAIGLAIVSSIYRNRKSTRINQSTLLNK</sequence>
<dbReference type="EC" id="7.1.1.-" evidence="1"/>
<dbReference type="EMBL" id="AP009372">
    <property type="protein sequence ID" value="BAF50341.1"/>
    <property type="molecule type" value="Genomic_DNA"/>
</dbReference>
<dbReference type="RefSeq" id="YP_001123516.1">
    <property type="nucleotide sequence ID" value="NC_009271.1"/>
</dbReference>
<dbReference type="SMR" id="A4QKY6"/>
<dbReference type="GeneID" id="4962662"/>
<dbReference type="GO" id="GO:0009535">
    <property type="term" value="C:chloroplast thylakoid membrane"/>
    <property type="evidence" value="ECO:0007669"/>
    <property type="project" value="UniProtKB-SubCell"/>
</dbReference>
<dbReference type="GO" id="GO:0030964">
    <property type="term" value="C:NADH dehydrogenase complex"/>
    <property type="evidence" value="ECO:0007669"/>
    <property type="project" value="TreeGrafter"/>
</dbReference>
<dbReference type="GO" id="GO:0016655">
    <property type="term" value="F:oxidoreductase activity, acting on NAD(P)H, quinone or similar compound as acceptor"/>
    <property type="evidence" value="ECO:0007669"/>
    <property type="project" value="UniProtKB-UniRule"/>
</dbReference>
<dbReference type="GO" id="GO:0048038">
    <property type="term" value="F:quinone binding"/>
    <property type="evidence" value="ECO:0007669"/>
    <property type="project" value="UniProtKB-KW"/>
</dbReference>
<dbReference type="GO" id="GO:0042773">
    <property type="term" value="P:ATP synthesis coupled electron transport"/>
    <property type="evidence" value="ECO:0007669"/>
    <property type="project" value="InterPro"/>
</dbReference>
<dbReference type="GO" id="GO:0019684">
    <property type="term" value="P:photosynthesis, light reaction"/>
    <property type="evidence" value="ECO:0007669"/>
    <property type="project" value="UniProtKB-UniRule"/>
</dbReference>
<dbReference type="FunFam" id="1.10.287.3510:FF:000001">
    <property type="entry name" value="NADH-quinone oxidoreductase subunit K"/>
    <property type="match status" value="1"/>
</dbReference>
<dbReference type="Gene3D" id="1.10.287.3510">
    <property type="match status" value="1"/>
</dbReference>
<dbReference type="HAMAP" id="MF_01456">
    <property type="entry name" value="NDH1_NuoK"/>
    <property type="match status" value="1"/>
</dbReference>
<dbReference type="InterPro" id="IPR001133">
    <property type="entry name" value="NADH_UbQ_OxRdtase_chain4L/K"/>
</dbReference>
<dbReference type="InterPro" id="IPR039428">
    <property type="entry name" value="NUOK/Mnh_C1-like"/>
</dbReference>
<dbReference type="NCBIfam" id="NF004320">
    <property type="entry name" value="PRK05715.1-2"/>
    <property type="match status" value="1"/>
</dbReference>
<dbReference type="NCBIfam" id="NF004322">
    <property type="entry name" value="PRK05715.1-4"/>
    <property type="match status" value="1"/>
</dbReference>
<dbReference type="PANTHER" id="PTHR11434:SF16">
    <property type="entry name" value="NADH-UBIQUINONE OXIDOREDUCTASE CHAIN 4L"/>
    <property type="match status" value="1"/>
</dbReference>
<dbReference type="PANTHER" id="PTHR11434">
    <property type="entry name" value="NADH-UBIQUINONE OXIDOREDUCTASE SUBUNIT ND4L"/>
    <property type="match status" value="1"/>
</dbReference>
<dbReference type="Pfam" id="PF00420">
    <property type="entry name" value="Oxidored_q2"/>
    <property type="match status" value="1"/>
</dbReference>
<reference key="1">
    <citation type="submission" date="2007-03" db="EMBL/GenBank/DDBJ databases">
        <title>Sequencing analysis of Crucihimalaya wallichii chloroplast DNA.</title>
        <authorList>
            <person name="Hosouchi T."/>
            <person name="Tsuruoka H."/>
            <person name="Kotani H."/>
        </authorList>
    </citation>
    <scope>NUCLEOTIDE SEQUENCE [LARGE SCALE GENOMIC DNA]</scope>
</reference>
<evidence type="ECO:0000255" key="1">
    <source>
        <dbReference type="HAMAP-Rule" id="MF_01456"/>
    </source>
</evidence>
<feature type="chain" id="PRO_0000360320" description="NAD(P)H-quinone oxidoreductase subunit 4L, chloroplastic">
    <location>
        <begin position="1"/>
        <end position="101"/>
    </location>
</feature>
<feature type="transmembrane region" description="Helical" evidence="1">
    <location>
        <begin position="2"/>
        <end position="22"/>
    </location>
</feature>
<feature type="transmembrane region" description="Helical" evidence="1">
    <location>
        <begin position="32"/>
        <end position="52"/>
    </location>
</feature>
<feature type="transmembrane region" description="Helical" evidence="1">
    <location>
        <begin position="61"/>
        <end position="81"/>
    </location>
</feature>
<accession>A4QKY6</accession>
<protein>
    <recommendedName>
        <fullName evidence="1">NAD(P)H-quinone oxidoreductase subunit 4L, chloroplastic</fullName>
        <ecNumber evidence="1">7.1.1.-</ecNumber>
    </recommendedName>
    <alternativeName>
        <fullName evidence="1">NAD(P)H dehydrogenase subunit 4L</fullName>
    </alternativeName>
    <alternativeName>
        <fullName evidence="1">NADH-plastoquinone oxidoreductase subunit 4L</fullName>
    </alternativeName>
</protein>
<comment type="function">
    <text evidence="1">NDH shuttles electrons from NAD(P)H:plastoquinone, via FMN and iron-sulfur (Fe-S) centers, to quinones in the photosynthetic chain and possibly in a chloroplast respiratory chain. The immediate electron acceptor for the enzyme in this species is believed to be plastoquinone. Couples the redox reaction to proton translocation, and thus conserves the redox energy in a proton gradient.</text>
</comment>
<comment type="catalytic activity">
    <reaction evidence="1">
        <text>a plastoquinone + NADH + (n+1) H(+)(in) = a plastoquinol + NAD(+) + n H(+)(out)</text>
        <dbReference type="Rhea" id="RHEA:42608"/>
        <dbReference type="Rhea" id="RHEA-COMP:9561"/>
        <dbReference type="Rhea" id="RHEA-COMP:9562"/>
        <dbReference type="ChEBI" id="CHEBI:15378"/>
        <dbReference type="ChEBI" id="CHEBI:17757"/>
        <dbReference type="ChEBI" id="CHEBI:57540"/>
        <dbReference type="ChEBI" id="CHEBI:57945"/>
        <dbReference type="ChEBI" id="CHEBI:62192"/>
    </reaction>
</comment>
<comment type="catalytic activity">
    <reaction evidence="1">
        <text>a plastoquinone + NADPH + (n+1) H(+)(in) = a plastoquinol + NADP(+) + n H(+)(out)</text>
        <dbReference type="Rhea" id="RHEA:42612"/>
        <dbReference type="Rhea" id="RHEA-COMP:9561"/>
        <dbReference type="Rhea" id="RHEA-COMP:9562"/>
        <dbReference type="ChEBI" id="CHEBI:15378"/>
        <dbReference type="ChEBI" id="CHEBI:17757"/>
        <dbReference type="ChEBI" id="CHEBI:57783"/>
        <dbReference type="ChEBI" id="CHEBI:58349"/>
        <dbReference type="ChEBI" id="CHEBI:62192"/>
    </reaction>
</comment>
<comment type="subunit">
    <text evidence="1">NDH is composed of at least 16 different subunits, 5 of which are encoded in the nucleus.</text>
</comment>
<comment type="subcellular location">
    <subcellularLocation>
        <location evidence="1">Plastid</location>
        <location evidence="1">Chloroplast thylakoid membrane</location>
        <topology evidence="1">Multi-pass membrane protein</topology>
    </subcellularLocation>
</comment>
<comment type="similarity">
    <text evidence="1">Belongs to the complex I subunit 4L family.</text>
</comment>
<keyword id="KW-0150">Chloroplast</keyword>
<keyword id="KW-0472">Membrane</keyword>
<keyword id="KW-0520">NAD</keyword>
<keyword id="KW-0521">NADP</keyword>
<keyword id="KW-0934">Plastid</keyword>
<keyword id="KW-0618">Plastoquinone</keyword>
<keyword id="KW-0874">Quinone</keyword>
<keyword id="KW-0793">Thylakoid</keyword>
<keyword id="KW-1278">Translocase</keyword>
<keyword id="KW-0812">Transmembrane</keyword>
<keyword id="KW-1133">Transmembrane helix</keyword>
<keyword id="KW-0813">Transport</keyword>
<gene>
    <name evidence="1" type="primary">ndhE</name>
</gene>
<proteinExistence type="inferred from homology"/>
<organism>
    <name type="scientific">Crucihimalaya wallichii</name>
    <name type="common">Rock-cress</name>
    <name type="synonym">Arabidopsis campestris</name>
    <dbReference type="NCBI Taxonomy" id="78192"/>
    <lineage>
        <taxon>Eukaryota</taxon>
        <taxon>Viridiplantae</taxon>
        <taxon>Streptophyta</taxon>
        <taxon>Embryophyta</taxon>
        <taxon>Tracheophyta</taxon>
        <taxon>Spermatophyta</taxon>
        <taxon>Magnoliopsida</taxon>
        <taxon>eudicotyledons</taxon>
        <taxon>Gunneridae</taxon>
        <taxon>Pentapetalae</taxon>
        <taxon>rosids</taxon>
        <taxon>malvids</taxon>
        <taxon>Brassicales</taxon>
        <taxon>Brassicaceae</taxon>
        <taxon>Crucihimalayeae</taxon>
        <taxon>Crucihimalaya</taxon>
    </lineage>
</organism>
<name>NU4LC_CRUWA</name>